<sequence>MRESMRIELELQTDNFTVIPYNHQYYLASAIYNKIHSANPAYAKRLHNYQKFKFFTFSLLQIRKRVIRKEGIETIDGKAYLYISSPNNEFIENFVAGLLEDGKLRVGNVEFFVRKAKILPIPKKFNILKTISPIYLKTMIETEDGLKTYDLLPNNSKFYENLKNNLKKKYEAFYNEKCDMNFEFEVLKFRPKRMRIKNDIYCRCSEMVFKVWGDYDLIKFGYECGFGEKNSMGFGMVVNVEDKNQKNKKLKTKI</sequence>
<keyword id="KW-0002">3D-structure</keyword>
<keyword id="KW-0051">Antiviral defense</keyword>
<keyword id="KW-0255">Endonuclease</keyword>
<keyword id="KW-0378">Hydrolase</keyword>
<keyword id="KW-0540">Nuclease</keyword>
<keyword id="KW-1185">Reference proteome</keyword>
<keyword id="KW-0694">RNA-binding</keyword>
<organism>
    <name type="scientific">Methanocaldococcus jannaschii (strain ATCC 43067 / DSM 2661 / JAL-1 / JCM 10045 / NBRC 100440)</name>
    <name type="common">Methanococcus jannaschii</name>
    <dbReference type="NCBI Taxonomy" id="243232"/>
    <lineage>
        <taxon>Archaea</taxon>
        <taxon>Methanobacteriati</taxon>
        <taxon>Methanobacteriota</taxon>
        <taxon>Methanomada group</taxon>
        <taxon>Methanococci</taxon>
        <taxon>Methanococcales</taxon>
        <taxon>Methanocaldococcaceae</taxon>
        <taxon>Methanocaldococcus</taxon>
    </lineage>
</organism>
<proteinExistence type="evidence at protein level"/>
<name>CAS6A_METJA</name>
<reference key="1">
    <citation type="journal article" date="1996" name="Science">
        <title>Complete genome sequence of the methanogenic archaeon, Methanococcus jannaschii.</title>
        <authorList>
            <person name="Bult C.J."/>
            <person name="White O."/>
            <person name="Olsen G.J."/>
            <person name="Zhou L."/>
            <person name="Fleischmann R.D."/>
            <person name="Sutton G.G."/>
            <person name="Blake J.A."/>
            <person name="FitzGerald L.M."/>
            <person name="Clayton R.A."/>
            <person name="Gocayne J.D."/>
            <person name="Kerlavage A.R."/>
            <person name="Dougherty B.A."/>
            <person name="Tomb J.-F."/>
            <person name="Adams M.D."/>
            <person name="Reich C.I."/>
            <person name="Overbeek R."/>
            <person name="Kirkness E.F."/>
            <person name="Weinstock K.G."/>
            <person name="Merrick J.M."/>
            <person name="Glodek A."/>
            <person name="Scott J.L."/>
            <person name="Geoghagen N.S.M."/>
            <person name="Weidman J.F."/>
            <person name="Fuhrmann J.L."/>
            <person name="Nguyen D."/>
            <person name="Utterback T.R."/>
            <person name="Kelley J.M."/>
            <person name="Peterson J.D."/>
            <person name="Sadow P.W."/>
            <person name="Hanna M.C."/>
            <person name="Cotton M.D."/>
            <person name="Roberts K.M."/>
            <person name="Hurst M.A."/>
            <person name="Kaine B.P."/>
            <person name="Borodovsky M."/>
            <person name="Klenk H.-P."/>
            <person name="Fraser C.M."/>
            <person name="Smith H.O."/>
            <person name="Woese C.R."/>
            <person name="Venter J.C."/>
        </authorList>
    </citation>
    <scope>NUCLEOTIDE SEQUENCE [LARGE SCALE GENOMIC DNA]</scope>
    <source>
        <strain>ATCC 43067 / DSM 2661 / JAL-1 / JCM 10045 / NBRC 100440</strain>
    </source>
</reference>
<accession>Q57820</accession>
<evidence type="ECO:0000250" key="1">
    <source>
        <dbReference type="UniProtKB" id="Q8U1S4"/>
    </source>
</evidence>
<evidence type="ECO:0000305" key="2"/>
<evidence type="ECO:0007829" key="3">
    <source>
        <dbReference type="PDB" id="5YI6"/>
    </source>
</evidence>
<dbReference type="EC" id="3.1.-.-"/>
<dbReference type="EMBL" id="L77117">
    <property type="protein sequence ID" value="AAB98364.1"/>
    <property type="molecule type" value="Genomic_DNA"/>
</dbReference>
<dbReference type="PIR" id="G64346">
    <property type="entry name" value="G64346"/>
</dbReference>
<dbReference type="PDB" id="5YI6">
    <property type="method" value="X-ray"/>
    <property type="resolution" value="1.85 A"/>
    <property type="chains" value="A/B/C/D=1-254"/>
</dbReference>
<dbReference type="PDBsum" id="5YI6"/>
<dbReference type="SMR" id="Q57820"/>
<dbReference type="STRING" id="243232.MJ_0375"/>
<dbReference type="PaxDb" id="243232-MJ_0375"/>
<dbReference type="EnsemblBacteria" id="AAB98364">
    <property type="protein sequence ID" value="AAB98364"/>
    <property type="gene ID" value="MJ_0375"/>
</dbReference>
<dbReference type="KEGG" id="mja:MJ_0375"/>
<dbReference type="eggNOG" id="arCOG04342">
    <property type="taxonomic scope" value="Archaea"/>
</dbReference>
<dbReference type="HOGENOM" id="CLU_089858_1_1_2"/>
<dbReference type="InParanoid" id="Q57820"/>
<dbReference type="PhylomeDB" id="Q57820"/>
<dbReference type="Proteomes" id="UP000000805">
    <property type="component" value="Chromosome"/>
</dbReference>
<dbReference type="GO" id="GO:0004519">
    <property type="term" value="F:endonuclease activity"/>
    <property type="evidence" value="ECO:0007669"/>
    <property type="project" value="UniProtKB-KW"/>
</dbReference>
<dbReference type="GO" id="GO:0003723">
    <property type="term" value="F:RNA binding"/>
    <property type="evidence" value="ECO:0007669"/>
    <property type="project" value="UniProtKB-KW"/>
</dbReference>
<dbReference type="GO" id="GO:0051607">
    <property type="term" value="P:defense response to virus"/>
    <property type="evidence" value="ECO:0007669"/>
    <property type="project" value="UniProtKB-KW"/>
</dbReference>
<dbReference type="CDD" id="cd09759">
    <property type="entry name" value="Cas6_I-A"/>
    <property type="match status" value="1"/>
</dbReference>
<dbReference type="Gene3D" id="3.30.70.1890">
    <property type="match status" value="1"/>
</dbReference>
<dbReference type="Gene3D" id="3.30.70.1900">
    <property type="match status" value="1"/>
</dbReference>
<dbReference type="InterPro" id="IPR049435">
    <property type="entry name" value="Cas_Cas6_C"/>
</dbReference>
<dbReference type="InterPro" id="IPR010156">
    <property type="entry name" value="CRISPR-assoc_prot_Cas6"/>
</dbReference>
<dbReference type="InterPro" id="IPR045747">
    <property type="entry name" value="CRISPR-assoc_prot_Cas6_N_sf"/>
</dbReference>
<dbReference type="NCBIfam" id="TIGR01877">
    <property type="entry name" value="cas_cas6"/>
    <property type="match status" value="1"/>
</dbReference>
<dbReference type="PANTHER" id="PTHR36984">
    <property type="entry name" value="CRISPR-ASSOCIATED ENDORIBONUCLEASE CAS6 1"/>
    <property type="match status" value="1"/>
</dbReference>
<dbReference type="PANTHER" id="PTHR36984:SF1">
    <property type="entry name" value="CRISPR-ASSOCIATED ENDORIBONUCLEASE CAS6 1"/>
    <property type="match status" value="1"/>
</dbReference>
<dbReference type="Pfam" id="PF21350">
    <property type="entry name" value="Cas6_I-A"/>
    <property type="match status" value="1"/>
</dbReference>
<dbReference type="Pfam" id="PF01881">
    <property type="entry name" value="Cas_Cas6_C"/>
    <property type="match status" value="1"/>
</dbReference>
<dbReference type="PIRSF" id="PIRSF005054">
    <property type="entry name" value="PF1131"/>
    <property type="match status" value="1"/>
</dbReference>
<comment type="function">
    <text evidence="1">CRISPR (clustered regularly interspaced short palindromic repeat) is an adaptive immune system that provides protection against mobile genetic elements (viruses, transposable elements and conjugative plasmids). CRISPR clusters contain sequences complementary to antecedent mobile elements and target invading nucleic acids. CRISPR clusters are transcribed and processed into CRISPR RNA (crRNA). This protein processes pre-crRNA into individual crRNA units.</text>
</comment>
<comment type="similarity">
    <text evidence="2">Belongs to the CRISPR-associated protein Cas6/Cse3/CasE family.</text>
</comment>
<protein>
    <recommendedName>
        <fullName>CRISPR-associated endoribonuclease Cas6 1</fullName>
        <ecNumber>3.1.-.-</ecNumber>
    </recommendedName>
</protein>
<gene>
    <name type="primary">cas6a</name>
    <name type="ordered locus">MJ0375</name>
</gene>
<feature type="chain" id="PRO_0000106838" description="CRISPR-associated endoribonuclease Cas6 1">
    <location>
        <begin position="1"/>
        <end position="254"/>
    </location>
</feature>
<feature type="active site" description="Proton acceptor" evidence="1">
    <location>
        <position position="32"/>
    </location>
</feature>
<feature type="active site" description="Proton donor" evidence="1">
    <location>
        <position position="47"/>
    </location>
</feature>
<feature type="site" description="Transition state stabilizer" evidence="1">
    <location>
        <position position="53"/>
    </location>
</feature>
<feature type="strand" evidence="3">
    <location>
        <begin position="5"/>
        <end position="12"/>
    </location>
</feature>
<feature type="strand" evidence="3">
    <location>
        <begin position="17"/>
        <end position="20"/>
    </location>
</feature>
<feature type="turn" evidence="3">
    <location>
        <begin position="21"/>
        <end position="23"/>
    </location>
</feature>
<feature type="helix" evidence="3">
    <location>
        <begin position="24"/>
        <end position="35"/>
    </location>
</feature>
<feature type="helix" evidence="3">
    <location>
        <begin position="40"/>
        <end position="43"/>
    </location>
</feature>
<feature type="turn" evidence="3">
    <location>
        <begin position="44"/>
        <end position="46"/>
    </location>
</feature>
<feature type="helix" evidence="3">
    <location>
        <begin position="47"/>
        <end position="49"/>
    </location>
</feature>
<feature type="strand" evidence="3">
    <location>
        <begin position="63"/>
        <end position="67"/>
    </location>
</feature>
<feature type="strand" evidence="3">
    <location>
        <begin position="69"/>
        <end position="86"/>
    </location>
</feature>
<feature type="helix" evidence="3">
    <location>
        <begin position="88"/>
        <end position="101"/>
    </location>
</feature>
<feature type="strand" evidence="3">
    <location>
        <begin position="103"/>
        <end position="106"/>
    </location>
</feature>
<feature type="strand" evidence="3">
    <location>
        <begin position="109"/>
        <end position="118"/>
    </location>
</feature>
<feature type="strand" evidence="3">
    <location>
        <begin position="126"/>
        <end position="132"/>
    </location>
</feature>
<feature type="strand" evidence="3">
    <location>
        <begin position="137"/>
        <end position="142"/>
    </location>
</feature>
<feature type="strand" evidence="3">
    <location>
        <begin position="145"/>
        <end position="150"/>
    </location>
</feature>
<feature type="helix" evidence="3">
    <location>
        <begin position="158"/>
        <end position="174"/>
    </location>
</feature>
<feature type="strand" evidence="3">
    <location>
        <begin position="182"/>
        <end position="195"/>
    </location>
</feature>
<feature type="strand" evidence="3">
    <location>
        <begin position="197"/>
        <end position="199"/>
    </location>
</feature>
<feature type="strand" evidence="3">
    <location>
        <begin position="201"/>
        <end position="213"/>
    </location>
</feature>
<feature type="helix" evidence="3">
    <location>
        <begin position="215"/>
        <end position="224"/>
    </location>
</feature>
<feature type="strand" evidence="3">
    <location>
        <begin position="226"/>
        <end position="228"/>
    </location>
</feature>
<feature type="helix" evidence="3">
    <location>
        <begin position="230"/>
        <end position="232"/>
    </location>
</feature>
<feature type="strand" evidence="3">
    <location>
        <begin position="237"/>
        <end position="240"/>
    </location>
</feature>